<sequence length="108" mass="11677">MSDTDYLTRAEAVLAAVERSVDAANDGDADIDLERNGSVLTLTFENGSKIIVNLQPPMKEVWIAAKAGGFHYRFVDGAWRDTRSGDEFFAALTGYATQQAGMPIAFSA</sequence>
<feature type="chain" id="PRO_1000010916" description="Iron-sulfur cluster assembly protein CyaY">
    <location>
        <begin position="1"/>
        <end position="108"/>
    </location>
</feature>
<reference key="1">
    <citation type="journal article" date="2010" name="Genome Biol. Evol.">
        <title>Continuing evolution of Burkholderia mallei through genome reduction and large-scale rearrangements.</title>
        <authorList>
            <person name="Losada L."/>
            <person name="Ronning C.M."/>
            <person name="DeShazer D."/>
            <person name="Woods D."/>
            <person name="Fedorova N."/>
            <person name="Kim H.S."/>
            <person name="Shabalina S.A."/>
            <person name="Pearson T.R."/>
            <person name="Brinkac L."/>
            <person name="Tan P."/>
            <person name="Nandi T."/>
            <person name="Crabtree J."/>
            <person name="Badger J."/>
            <person name="Beckstrom-Sternberg S."/>
            <person name="Saqib M."/>
            <person name="Schutzer S.E."/>
            <person name="Keim P."/>
            <person name="Nierman W.C."/>
        </authorList>
    </citation>
    <scope>NUCLEOTIDE SEQUENCE [LARGE SCALE GENOMIC DNA]</scope>
    <source>
        <strain>NCTC 10229</strain>
    </source>
</reference>
<gene>
    <name evidence="1" type="primary">cyaY</name>
    <name type="ordered locus">BMA10229_A1895</name>
</gene>
<organism>
    <name type="scientific">Burkholderia mallei (strain NCTC 10229)</name>
    <dbReference type="NCBI Taxonomy" id="412022"/>
    <lineage>
        <taxon>Bacteria</taxon>
        <taxon>Pseudomonadati</taxon>
        <taxon>Pseudomonadota</taxon>
        <taxon>Betaproteobacteria</taxon>
        <taxon>Burkholderiales</taxon>
        <taxon>Burkholderiaceae</taxon>
        <taxon>Burkholderia</taxon>
        <taxon>pseudomallei group</taxon>
    </lineage>
</organism>
<protein>
    <recommendedName>
        <fullName evidence="1">Iron-sulfur cluster assembly protein CyaY</fullName>
    </recommendedName>
</protein>
<dbReference type="EMBL" id="CP000546">
    <property type="protein sequence ID" value="ABN02894.1"/>
    <property type="molecule type" value="Genomic_DNA"/>
</dbReference>
<dbReference type="RefSeq" id="WP_004196764.1">
    <property type="nucleotide sequence ID" value="NC_008836.1"/>
</dbReference>
<dbReference type="SMR" id="A2S7F1"/>
<dbReference type="GeneID" id="93061793"/>
<dbReference type="KEGG" id="bml:BMA10229_A1895"/>
<dbReference type="HOGENOM" id="CLU_080880_3_0_4"/>
<dbReference type="Proteomes" id="UP000002283">
    <property type="component" value="Chromosome I"/>
</dbReference>
<dbReference type="GO" id="GO:0005829">
    <property type="term" value="C:cytosol"/>
    <property type="evidence" value="ECO:0007669"/>
    <property type="project" value="TreeGrafter"/>
</dbReference>
<dbReference type="GO" id="GO:0008199">
    <property type="term" value="F:ferric iron binding"/>
    <property type="evidence" value="ECO:0007669"/>
    <property type="project" value="InterPro"/>
</dbReference>
<dbReference type="GO" id="GO:0008198">
    <property type="term" value="F:ferrous iron binding"/>
    <property type="evidence" value="ECO:0007669"/>
    <property type="project" value="TreeGrafter"/>
</dbReference>
<dbReference type="GO" id="GO:0016226">
    <property type="term" value="P:iron-sulfur cluster assembly"/>
    <property type="evidence" value="ECO:0007669"/>
    <property type="project" value="UniProtKB-UniRule"/>
</dbReference>
<dbReference type="CDD" id="cd00503">
    <property type="entry name" value="Frataxin"/>
    <property type="match status" value="1"/>
</dbReference>
<dbReference type="Gene3D" id="3.30.920.10">
    <property type="entry name" value="Frataxin/CyaY"/>
    <property type="match status" value="1"/>
</dbReference>
<dbReference type="HAMAP" id="MF_00142">
    <property type="entry name" value="CyaY"/>
    <property type="match status" value="1"/>
</dbReference>
<dbReference type="InterPro" id="IPR047584">
    <property type="entry name" value="CyaY"/>
</dbReference>
<dbReference type="InterPro" id="IPR002908">
    <property type="entry name" value="Frataxin/CyaY"/>
</dbReference>
<dbReference type="InterPro" id="IPR036524">
    <property type="entry name" value="Frataxin/CyaY_sf"/>
</dbReference>
<dbReference type="InterPro" id="IPR020895">
    <property type="entry name" value="Frataxin_CS"/>
</dbReference>
<dbReference type="NCBIfam" id="TIGR03421">
    <property type="entry name" value="FeS_CyaY"/>
    <property type="match status" value="1"/>
</dbReference>
<dbReference type="PANTHER" id="PTHR16821">
    <property type="entry name" value="FRATAXIN"/>
    <property type="match status" value="1"/>
</dbReference>
<dbReference type="PANTHER" id="PTHR16821:SF2">
    <property type="entry name" value="FRATAXIN, MITOCHONDRIAL"/>
    <property type="match status" value="1"/>
</dbReference>
<dbReference type="Pfam" id="PF01491">
    <property type="entry name" value="Frataxin_Cyay"/>
    <property type="match status" value="1"/>
</dbReference>
<dbReference type="SMART" id="SM01219">
    <property type="entry name" value="Frataxin_Cyay"/>
    <property type="match status" value="1"/>
</dbReference>
<dbReference type="SUPFAM" id="SSF55387">
    <property type="entry name" value="Frataxin/Nqo15-like"/>
    <property type="match status" value="1"/>
</dbReference>
<dbReference type="PROSITE" id="PS01344">
    <property type="entry name" value="FRATAXIN_1"/>
    <property type="match status" value="1"/>
</dbReference>
<dbReference type="PROSITE" id="PS50810">
    <property type="entry name" value="FRATAXIN_2"/>
    <property type="match status" value="1"/>
</dbReference>
<proteinExistence type="inferred from homology"/>
<keyword id="KW-0408">Iron</keyword>
<keyword id="KW-0479">Metal-binding</keyword>
<comment type="function">
    <text evidence="1">Involved in iron-sulfur (Fe-S) cluster assembly. May act as a regulator of Fe-S biogenesis.</text>
</comment>
<comment type="similarity">
    <text evidence="1">Belongs to the frataxin family.</text>
</comment>
<name>CYAY_BURM9</name>
<evidence type="ECO:0000255" key="1">
    <source>
        <dbReference type="HAMAP-Rule" id="MF_00142"/>
    </source>
</evidence>
<accession>A2S7F1</accession>